<evidence type="ECO:0000250" key="1"/>
<evidence type="ECO:0000256" key="2">
    <source>
        <dbReference type="SAM" id="MobiDB-lite"/>
    </source>
</evidence>
<evidence type="ECO:0000269" key="3">
    <source>
    </source>
</evidence>
<evidence type="ECO:0000269" key="4">
    <source>
    </source>
</evidence>
<evidence type="ECO:0000305" key="5"/>
<sequence>MSRRRAHDTEDEGYDHRRNKRRRVSENQEIEDRLESLILRVGERSTSSVESNLEGLVSVLEADLGTFRLKILRILSDCAVRMPEKCTVYTTLVGLLNAKNYKFGGEFVDHMVKTFKESLKMCRWDAARYSLRFLADLVNCHVISATSLLQLLDTMIDVSNEDTVPQVRRDWFVFAVLSTLPWVGRDLYEKKESALESLLLRIEVYLNKRSKKHHNALRVWSSDAPHPQEEYLDCLWAQIRKLRQDNWAEKHIPRPYLVFDSILCEALQHNLPTIVPPPHHDNFEYPMPWVVYRMFDYTDCPDGPNLPGAHSIERFLIEEHLHHIIETYHHERKDCAAQLLSFPYKHKIPLEYCIVEVVFAELFHMPTPRYLDICYGSILIELCKLQPATLPQVLAQATEILFMRIDSMNTSCFDRFVNWFSYHLSNFKFTWSWDEWDSCLLLDGEHPRPKFIQEVLQKCLRLSYHQRITEMMPTTYAKLIPLTPVPNYKYANEEAANLPGTTVAHQLVVAIRQKCTPEEVVNILKDIPNSGYSGEEMSDGSFNALKIDVFVQTLLNLGSKSFSHSFAAISKFHSVFRALAETEEAQICILHNIFELWSSHQQMMVVLIDKLLKLQIVDCSAVATWIFSKEMTGEFTKLYLWEILHLTIKKMNKHVIKLNTELSEAKEKLAKADSSSSDSEDDSSHKRKKPITHADKPSEEVVERMEEKLEAANVNQKRLFLIVFQRFIMILSEHLLRSDTDGRDPDTDWYRWTIGRLQQVFLMHHEQVQKYSSTLETLLFTSDLDTHILEVFQQFVALRA</sequence>
<dbReference type="EMBL" id="AJ238970">
    <property type="protein sequence ID" value="CAB53186.1"/>
    <property type="molecule type" value="mRNA"/>
</dbReference>
<dbReference type="EMBL" id="AE014298">
    <property type="protein sequence ID" value="AAN09124.1"/>
    <property type="molecule type" value="Genomic_DNA"/>
</dbReference>
<dbReference type="EMBL" id="AY051796">
    <property type="protein sequence ID" value="AAK93220.1"/>
    <property type="molecule type" value="mRNA"/>
</dbReference>
<dbReference type="EMBL" id="AL031766">
    <property type="protein sequence ID" value="CAA21136.1"/>
    <property type="molecule type" value="Genomic_DNA"/>
</dbReference>
<dbReference type="RefSeq" id="NP_524750.2">
    <property type="nucleotide sequence ID" value="NM_080011.3"/>
</dbReference>
<dbReference type="RefSeq" id="NP_726938.1">
    <property type="nucleotide sequence ID" value="NM_167012.3"/>
</dbReference>
<dbReference type="SMR" id="Q7K4N3"/>
<dbReference type="BioGRID" id="69037">
    <property type="interactions" value="18"/>
</dbReference>
<dbReference type="FunCoup" id="Q7K4N3">
    <property type="interactions" value="2685"/>
</dbReference>
<dbReference type="IntAct" id="Q7K4N3">
    <property type="interactions" value="61"/>
</dbReference>
<dbReference type="STRING" id="7227.FBpp0070652"/>
<dbReference type="iPTMnet" id="Q7K4N3"/>
<dbReference type="PaxDb" id="7227-FBpp0070652"/>
<dbReference type="ABCD" id="Q7K4N3">
    <property type="antibodies" value="7 sequenced antibodies"/>
</dbReference>
<dbReference type="DNASU" id="44409"/>
<dbReference type="EnsemblMetazoa" id="FBtr0070683">
    <property type="protein sequence ID" value="FBpp0070651"/>
    <property type="gene ID" value="FBgn0022942"/>
</dbReference>
<dbReference type="EnsemblMetazoa" id="FBtr0070684">
    <property type="protein sequence ID" value="FBpp0070652"/>
    <property type="gene ID" value="FBgn0022942"/>
</dbReference>
<dbReference type="GeneID" id="44409"/>
<dbReference type="KEGG" id="dme:Dmel_CG7035"/>
<dbReference type="UCSC" id="CG7035-RA">
    <property type="organism name" value="d. melanogaster"/>
</dbReference>
<dbReference type="AGR" id="FB:FBgn0022942"/>
<dbReference type="CTD" id="44409"/>
<dbReference type="FlyBase" id="FBgn0022942">
    <property type="gene designation" value="Cbp80"/>
</dbReference>
<dbReference type="VEuPathDB" id="VectorBase:FBgn0022942"/>
<dbReference type="eggNOG" id="KOG1104">
    <property type="taxonomic scope" value="Eukaryota"/>
</dbReference>
<dbReference type="GeneTree" id="ENSGT00390000001733"/>
<dbReference type="HOGENOM" id="CLU_013207_0_0_1"/>
<dbReference type="InParanoid" id="Q7K4N3"/>
<dbReference type="OMA" id="CAAEGLM"/>
<dbReference type="OrthoDB" id="10252707at2759"/>
<dbReference type="PhylomeDB" id="Q7K4N3"/>
<dbReference type="Reactome" id="R-DME-111367">
    <property type="pathway name" value="SLBP independent Processing of Histone Pre-mRNAs"/>
</dbReference>
<dbReference type="Reactome" id="R-DME-113418">
    <property type="pathway name" value="Formation of the Early Elongation Complex"/>
</dbReference>
<dbReference type="Reactome" id="R-DME-159227">
    <property type="pathway name" value="Transport of the SLBP independent Mature mRNA"/>
</dbReference>
<dbReference type="Reactome" id="R-DME-159230">
    <property type="pathway name" value="Transport of the SLBP Dependant Mature mRNA"/>
</dbReference>
<dbReference type="Reactome" id="R-DME-159231">
    <property type="pathway name" value="Transport of Mature mRNA Derived from an Intronless Transcript"/>
</dbReference>
<dbReference type="Reactome" id="R-DME-159236">
    <property type="pathway name" value="Transport of Mature mRNA derived from an Intron-Containing Transcript"/>
</dbReference>
<dbReference type="Reactome" id="R-DME-674695">
    <property type="pathway name" value="RNA Polymerase II Pre-transcription Events"/>
</dbReference>
<dbReference type="Reactome" id="R-DME-6807505">
    <property type="pathway name" value="RNA polymerase II transcribes snRNA genes"/>
</dbReference>
<dbReference type="Reactome" id="R-DME-72086">
    <property type="pathway name" value="mRNA Capping"/>
</dbReference>
<dbReference type="Reactome" id="R-DME-72163">
    <property type="pathway name" value="mRNA Splicing - Major Pathway"/>
</dbReference>
<dbReference type="Reactome" id="R-DME-72165">
    <property type="pathway name" value="mRNA Splicing - Minor Pathway"/>
</dbReference>
<dbReference type="Reactome" id="R-DME-72187">
    <property type="pathway name" value="mRNA 3'-end processing"/>
</dbReference>
<dbReference type="Reactome" id="R-DME-72203">
    <property type="pathway name" value="Processing of Capped Intron-Containing Pre-mRNA"/>
</dbReference>
<dbReference type="Reactome" id="R-DME-73856">
    <property type="pathway name" value="RNA Polymerase II Transcription Termination"/>
</dbReference>
<dbReference type="Reactome" id="R-DME-77588">
    <property type="pathway name" value="SLBP Dependent Processing of Replication-Dependent Histone Pre-mRNAs"/>
</dbReference>
<dbReference type="Reactome" id="R-DME-77595">
    <property type="pathway name" value="Processing of Intronless Pre-mRNAs"/>
</dbReference>
<dbReference type="Reactome" id="R-DME-975956">
    <property type="pathway name" value="Nonsense Mediated Decay (NMD) independent of the Exon Junction Complex (EJC)"/>
</dbReference>
<dbReference type="Reactome" id="R-DME-975957">
    <property type="pathway name" value="Nonsense Mediated Decay (NMD) enhanced by the Exon Junction Complex (EJC)"/>
</dbReference>
<dbReference type="SignaLink" id="Q7K4N3"/>
<dbReference type="BioGRID-ORCS" id="44409">
    <property type="hits" value="1 hit in 1 CRISPR screen"/>
</dbReference>
<dbReference type="ChiTaRS" id="Cbp80">
    <property type="organism name" value="fly"/>
</dbReference>
<dbReference type="GenomeRNAi" id="44409"/>
<dbReference type="PRO" id="PR:Q7K4N3"/>
<dbReference type="Proteomes" id="UP000000803">
    <property type="component" value="Chromosome X"/>
</dbReference>
<dbReference type="Bgee" id="FBgn0022942">
    <property type="expression patterns" value="Expressed in egg chamber and 98 other cell types or tissues"/>
</dbReference>
<dbReference type="ExpressionAtlas" id="Q7K4N3">
    <property type="expression patterns" value="baseline and differential"/>
</dbReference>
<dbReference type="GO" id="GO:0071013">
    <property type="term" value="C:catalytic step 2 spliceosome"/>
    <property type="evidence" value="ECO:0007005"/>
    <property type="project" value="FlyBase"/>
</dbReference>
<dbReference type="GO" id="GO:0005846">
    <property type="term" value="C:nuclear cap binding complex"/>
    <property type="evidence" value="ECO:0000318"/>
    <property type="project" value="GO_Central"/>
</dbReference>
<dbReference type="GO" id="GO:0005634">
    <property type="term" value="C:nucleus"/>
    <property type="evidence" value="ECO:0000318"/>
    <property type="project" value="GO_Central"/>
</dbReference>
<dbReference type="GO" id="GO:0099524">
    <property type="term" value="C:postsynaptic cytosol"/>
    <property type="evidence" value="ECO:0000314"/>
    <property type="project" value="FlyBase"/>
</dbReference>
<dbReference type="GO" id="GO:0071011">
    <property type="term" value="C:precatalytic spliceosome"/>
    <property type="evidence" value="ECO:0007005"/>
    <property type="project" value="FlyBase"/>
</dbReference>
<dbReference type="GO" id="GO:0099523">
    <property type="term" value="C:presynaptic cytosol"/>
    <property type="evidence" value="ECO:0000314"/>
    <property type="project" value="FlyBase"/>
</dbReference>
<dbReference type="GO" id="GO:0003729">
    <property type="term" value="F:mRNA binding"/>
    <property type="evidence" value="ECO:0000318"/>
    <property type="project" value="GO_Central"/>
</dbReference>
<dbReference type="GO" id="GO:0000339">
    <property type="term" value="F:RNA cap binding"/>
    <property type="evidence" value="ECO:0000318"/>
    <property type="project" value="GO_Central"/>
</dbReference>
<dbReference type="GO" id="GO:0006370">
    <property type="term" value="P:7-methylguanosine mRNA capping"/>
    <property type="evidence" value="ECO:0007669"/>
    <property type="project" value="UniProtKB-KW"/>
</dbReference>
<dbReference type="GO" id="GO:0006406">
    <property type="term" value="P:mRNA export from nucleus"/>
    <property type="evidence" value="ECO:0007669"/>
    <property type="project" value="InterPro"/>
</dbReference>
<dbReference type="GO" id="GO:0000398">
    <property type="term" value="P:mRNA splicing, via spliceosome"/>
    <property type="evidence" value="ECO:0000250"/>
    <property type="project" value="FlyBase"/>
</dbReference>
<dbReference type="GO" id="GO:0045071">
    <property type="term" value="P:negative regulation of viral genome replication"/>
    <property type="evidence" value="ECO:0000315"/>
    <property type="project" value="FlyBase"/>
</dbReference>
<dbReference type="GO" id="GO:0000184">
    <property type="term" value="P:nuclear-transcribed mRNA catabolic process, nonsense-mediated decay"/>
    <property type="evidence" value="ECO:0000318"/>
    <property type="project" value="GO_Central"/>
</dbReference>
<dbReference type="GO" id="GO:0031053">
    <property type="term" value="P:primary miRNA processing"/>
    <property type="evidence" value="ECO:0000315"/>
    <property type="project" value="UniProtKB"/>
</dbReference>
<dbReference type="GO" id="GO:0035194">
    <property type="term" value="P:regulatory ncRNA-mediated post-transcriptional gene silencing"/>
    <property type="evidence" value="ECO:0000315"/>
    <property type="project" value="UniProtKB"/>
</dbReference>
<dbReference type="GO" id="GO:0030422">
    <property type="term" value="P:siRNA processing"/>
    <property type="evidence" value="ECO:0000315"/>
    <property type="project" value="FlyBase"/>
</dbReference>
<dbReference type="FunFam" id="1.25.40.180:FF:000010">
    <property type="entry name" value="Nuclear cap-binding protein subunit 1"/>
    <property type="match status" value="1"/>
</dbReference>
<dbReference type="FunFam" id="1.25.40.180:FF:000041">
    <property type="entry name" value="Nuclear cap-binding protein subunit 1"/>
    <property type="match status" value="1"/>
</dbReference>
<dbReference type="Gene3D" id="1.25.40.180">
    <property type="match status" value="3"/>
</dbReference>
<dbReference type="InterPro" id="IPR016024">
    <property type="entry name" value="ARM-type_fold"/>
</dbReference>
<dbReference type="InterPro" id="IPR027159">
    <property type="entry name" value="CBP80"/>
</dbReference>
<dbReference type="InterPro" id="IPR015172">
    <property type="entry name" value="MIF4G-like_typ-1"/>
</dbReference>
<dbReference type="InterPro" id="IPR015174">
    <property type="entry name" value="MIF4G-like_typ-2"/>
</dbReference>
<dbReference type="InterPro" id="IPR003890">
    <property type="entry name" value="MIF4G-like_typ-3"/>
</dbReference>
<dbReference type="PANTHER" id="PTHR12412">
    <property type="entry name" value="CAP BINDING PROTEIN"/>
    <property type="match status" value="1"/>
</dbReference>
<dbReference type="PANTHER" id="PTHR12412:SF2">
    <property type="entry name" value="NUCLEAR CAP-BINDING PROTEIN SUBUNIT 1"/>
    <property type="match status" value="1"/>
</dbReference>
<dbReference type="Pfam" id="PF02854">
    <property type="entry name" value="MIF4G"/>
    <property type="match status" value="1"/>
</dbReference>
<dbReference type="Pfam" id="PF09088">
    <property type="entry name" value="MIF4G_like"/>
    <property type="match status" value="1"/>
</dbReference>
<dbReference type="Pfam" id="PF09090">
    <property type="entry name" value="MIF4G_like_2"/>
    <property type="match status" value="1"/>
</dbReference>
<dbReference type="SMART" id="SM00543">
    <property type="entry name" value="MIF4G"/>
    <property type="match status" value="1"/>
</dbReference>
<dbReference type="SUPFAM" id="SSF48371">
    <property type="entry name" value="ARM repeat"/>
    <property type="match status" value="3"/>
</dbReference>
<proteinExistence type="evidence at protein level"/>
<protein>
    <recommendedName>
        <fullName>Nuclear cap-binding protein subunit 1</fullName>
    </recommendedName>
    <alternativeName>
        <fullName>80 kDa nuclear cap-binding protein</fullName>
        <shortName>CBP80</shortName>
        <shortName>NCBP 80 kDa subunit</shortName>
    </alternativeName>
</protein>
<accession>Q7K4N3</accession>
<accession>Q7K7B2</accession>
<accession>Q9U980</accession>
<organism>
    <name type="scientific">Drosophila melanogaster</name>
    <name type="common">Fruit fly</name>
    <dbReference type="NCBI Taxonomy" id="7227"/>
    <lineage>
        <taxon>Eukaryota</taxon>
        <taxon>Metazoa</taxon>
        <taxon>Ecdysozoa</taxon>
        <taxon>Arthropoda</taxon>
        <taxon>Hexapoda</taxon>
        <taxon>Insecta</taxon>
        <taxon>Pterygota</taxon>
        <taxon>Neoptera</taxon>
        <taxon>Endopterygota</taxon>
        <taxon>Diptera</taxon>
        <taxon>Brachycera</taxon>
        <taxon>Muscomorpha</taxon>
        <taxon>Ephydroidea</taxon>
        <taxon>Drosophilidae</taxon>
        <taxon>Drosophila</taxon>
        <taxon>Sophophora</taxon>
    </lineage>
</organism>
<feature type="chain" id="PRO_0000385235" description="Nuclear cap-binding protein subunit 1">
    <location>
        <begin position="1"/>
        <end position="800"/>
    </location>
</feature>
<feature type="domain" description="MIF4G">
    <location>
        <begin position="31"/>
        <end position="243"/>
    </location>
</feature>
<feature type="region of interest" description="Disordered" evidence="2">
    <location>
        <begin position="1"/>
        <end position="26"/>
    </location>
</feature>
<feature type="region of interest" description="Disordered" evidence="2">
    <location>
        <begin position="669"/>
        <end position="700"/>
    </location>
</feature>
<feature type="modified residue" description="Phosphothreonine" evidence="3">
    <location>
        <position position="9"/>
    </location>
</feature>
<feature type="sequence conflict" description="In Ref. 1; CAB53186." evidence="5" ref="1">
    <original>RS</original>
    <variation>AT</variation>
    <location>
        <begin position="44"/>
        <end position="45"/>
    </location>
</feature>
<feature type="sequence conflict" description="In Ref. 1; CAB53186." evidence="5" ref="1">
    <original>R</original>
    <variation>A</variation>
    <location>
        <position position="81"/>
    </location>
</feature>
<gene>
    <name type="primary">Cbp80</name>
    <name type="ORF">CG7035</name>
</gene>
<reference key="1">
    <citation type="submission" date="1999-05" db="EMBL/GenBank/DDBJ databases">
        <authorList>
            <person name="Lewis J.D."/>
        </authorList>
    </citation>
    <scope>NUCLEOTIDE SEQUENCE [MRNA]</scope>
    <source>
        <strain>Oregon-R</strain>
        <tissue>Imaginal disk</tissue>
    </source>
</reference>
<reference key="2">
    <citation type="journal article" date="2000" name="Science">
        <title>The genome sequence of Drosophila melanogaster.</title>
        <authorList>
            <person name="Adams M.D."/>
            <person name="Celniker S.E."/>
            <person name="Holt R.A."/>
            <person name="Evans C.A."/>
            <person name="Gocayne J.D."/>
            <person name="Amanatides P.G."/>
            <person name="Scherer S.E."/>
            <person name="Li P.W."/>
            <person name="Hoskins R.A."/>
            <person name="Galle R.F."/>
            <person name="George R.A."/>
            <person name="Lewis S.E."/>
            <person name="Richards S."/>
            <person name="Ashburner M."/>
            <person name="Henderson S.N."/>
            <person name="Sutton G.G."/>
            <person name="Wortman J.R."/>
            <person name="Yandell M.D."/>
            <person name="Zhang Q."/>
            <person name="Chen L.X."/>
            <person name="Brandon R.C."/>
            <person name="Rogers Y.-H.C."/>
            <person name="Blazej R.G."/>
            <person name="Champe M."/>
            <person name="Pfeiffer B.D."/>
            <person name="Wan K.H."/>
            <person name="Doyle C."/>
            <person name="Baxter E.G."/>
            <person name="Helt G."/>
            <person name="Nelson C.R."/>
            <person name="Miklos G.L.G."/>
            <person name="Abril J.F."/>
            <person name="Agbayani A."/>
            <person name="An H.-J."/>
            <person name="Andrews-Pfannkoch C."/>
            <person name="Baldwin D."/>
            <person name="Ballew R.M."/>
            <person name="Basu A."/>
            <person name="Baxendale J."/>
            <person name="Bayraktaroglu L."/>
            <person name="Beasley E.M."/>
            <person name="Beeson K.Y."/>
            <person name="Benos P.V."/>
            <person name="Berman B.P."/>
            <person name="Bhandari D."/>
            <person name="Bolshakov S."/>
            <person name="Borkova D."/>
            <person name="Botchan M.R."/>
            <person name="Bouck J."/>
            <person name="Brokstein P."/>
            <person name="Brottier P."/>
            <person name="Burtis K.C."/>
            <person name="Busam D.A."/>
            <person name="Butler H."/>
            <person name="Cadieu E."/>
            <person name="Center A."/>
            <person name="Chandra I."/>
            <person name="Cherry J.M."/>
            <person name="Cawley S."/>
            <person name="Dahlke C."/>
            <person name="Davenport L.B."/>
            <person name="Davies P."/>
            <person name="de Pablos B."/>
            <person name="Delcher A."/>
            <person name="Deng Z."/>
            <person name="Mays A.D."/>
            <person name="Dew I."/>
            <person name="Dietz S.M."/>
            <person name="Dodson K."/>
            <person name="Doup L.E."/>
            <person name="Downes M."/>
            <person name="Dugan-Rocha S."/>
            <person name="Dunkov B.C."/>
            <person name="Dunn P."/>
            <person name="Durbin K.J."/>
            <person name="Evangelista C.C."/>
            <person name="Ferraz C."/>
            <person name="Ferriera S."/>
            <person name="Fleischmann W."/>
            <person name="Fosler C."/>
            <person name="Gabrielian A.E."/>
            <person name="Garg N.S."/>
            <person name="Gelbart W.M."/>
            <person name="Glasser K."/>
            <person name="Glodek A."/>
            <person name="Gong F."/>
            <person name="Gorrell J.H."/>
            <person name="Gu Z."/>
            <person name="Guan P."/>
            <person name="Harris M."/>
            <person name="Harris N.L."/>
            <person name="Harvey D.A."/>
            <person name="Heiman T.J."/>
            <person name="Hernandez J.R."/>
            <person name="Houck J."/>
            <person name="Hostin D."/>
            <person name="Houston K.A."/>
            <person name="Howland T.J."/>
            <person name="Wei M.-H."/>
            <person name="Ibegwam C."/>
            <person name="Jalali M."/>
            <person name="Kalush F."/>
            <person name="Karpen G.H."/>
            <person name="Ke Z."/>
            <person name="Kennison J.A."/>
            <person name="Ketchum K.A."/>
            <person name="Kimmel B.E."/>
            <person name="Kodira C.D."/>
            <person name="Kraft C.L."/>
            <person name="Kravitz S."/>
            <person name="Kulp D."/>
            <person name="Lai Z."/>
            <person name="Lasko P."/>
            <person name="Lei Y."/>
            <person name="Levitsky A.A."/>
            <person name="Li J.H."/>
            <person name="Li Z."/>
            <person name="Liang Y."/>
            <person name="Lin X."/>
            <person name="Liu X."/>
            <person name="Mattei B."/>
            <person name="McIntosh T.C."/>
            <person name="McLeod M.P."/>
            <person name="McPherson D."/>
            <person name="Merkulov G."/>
            <person name="Milshina N.V."/>
            <person name="Mobarry C."/>
            <person name="Morris J."/>
            <person name="Moshrefi A."/>
            <person name="Mount S.M."/>
            <person name="Moy M."/>
            <person name="Murphy B."/>
            <person name="Murphy L."/>
            <person name="Muzny D.M."/>
            <person name="Nelson D.L."/>
            <person name="Nelson D.R."/>
            <person name="Nelson K.A."/>
            <person name="Nixon K."/>
            <person name="Nusskern D.R."/>
            <person name="Pacleb J.M."/>
            <person name="Palazzolo M."/>
            <person name="Pittman G.S."/>
            <person name="Pan S."/>
            <person name="Pollard J."/>
            <person name="Puri V."/>
            <person name="Reese M.G."/>
            <person name="Reinert K."/>
            <person name="Remington K."/>
            <person name="Saunders R.D.C."/>
            <person name="Scheeler F."/>
            <person name="Shen H."/>
            <person name="Shue B.C."/>
            <person name="Siden-Kiamos I."/>
            <person name="Simpson M."/>
            <person name="Skupski M.P."/>
            <person name="Smith T.J."/>
            <person name="Spier E."/>
            <person name="Spradling A.C."/>
            <person name="Stapleton M."/>
            <person name="Strong R."/>
            <person name="Sun E."/>
            <person name="Svirskas R."/>
            <person name="Tector C."/>
            <person name="Turner R."/>
            <person name="Venter E."/>
            <person name="Wang A.H."/>
            <person name="Wang X."/>
            <person name="Wang Z.-Y."/>
            <person name="Wassarman D.A."/>
            <person name="Weinstock G.M."/>
            <person name="Weissenbach J."/>
            <person name="Williams S.M."/>
            <person name="Woodage T."/>
            <person name="Worley K.C."/>
            <person name="Wu D."/>
            <person name="Yang S."/>
            <person name="Yao Q.A."/>
            <person name="Ye J."/>
            <person name="Yeh R.-F."/>
            <person name="Zaveri J.S."/>
            <person name="Zhan M."/>
            <person name="Zhang G."/>
            <person name="Zhao Q."/>
            <person name="Zheng L."/>
            <person name="Zheng X.H."/>
            <person name="Zhong F.N."/>
            <person name="Zhong W."/>
            <person name="Zhou X."/>
            <person name="Zhu S.C."/>
            <person name="Zhu X."/>
            <person name="Smith H.O."/>
            <person name="Gibbs R.A."/>
            <person name="Myers E.W."/>
            <person name="Rubin G.M."/>
            <person name="Venter J.C."/>
        </authorList>
    </citation>
    <scope>NUCLEOTIDE SEQUENCE [LARGE SCALE GENOMIC DNA]</scope>
    <source>
        <strain>Berkeley</strain>
    </source>
</reference>
<reference key="3">
    <citation type="journal article" date="2002" name="Genome Biol.">
        <title>Annotation of the Drosophila melanogaster euchromatic genome: a systematic review.</title>
        <authorList>
            <person name="Misra S."/>
            <person name="Crosby M.A."/>
            <person name="Mungall C.J."/>
            <person name="Matthews B.B."/>
            <person name="Campbell K.S."/>
            <person name="Hradecky P."/>
            <person name="Huang Y."/>
            <person name="Kaminker J.S."/>
            <person name="Millburn G.H."/>
            <person name="Prochnik S.E."/>
            <person name="Smith C.D."/>
            <person name="Tupy J.L."/>
            <person name="Whitfield E.J."/>
            <person name="Bayraktaroglu L."/>
            <person name="Berman B.P."/>
            <person name="Bettencourt B.R."/>
            <person name="Celniker S.E."/>
            <person name="de Grey A.D.N.J."/>
            <person name="Drysdale R.A."/>
            <person name="Harris N.L."/>
            <person name="Richter J."/>
            <person name="Russo S."/>
            <person name="Schroeder A.J."/>
            <person name="Shu S.Q."/>
            <person name="Stapleton M."/>
            <person name="Yamada C."/>
            <person name="Ashburner M."/>
            <person name="Gelbart W.M."/>
            <person name="Rubin G.M."/>
            <person name="Lewis S.E."/>
        </authorList>
    </citation>
    <scope>GENOME REANNOTATION</scope>
    <source>
        <strain>Berkeley</strain>
    </source>
</reference>
<reference key="4">
    <citation type="journal article" date="2002" name="Genome Biol.">
        <title>A Drosophila full-length cDNA resource.</title>
        <authorList>
            <person name="Stapleton M."/>
            <person name="Carlson J.W."/>
            <person name="Brokstein P."/>
            <person name="Yu C."/>
            <person name="Champe M."/>
            <person name="George R.A."/>
            <person name="Guarin H."/>
            <person name="Kronmiller B."/>
            <person name="Pacleb J.M."/>
            <person name="Park S."/>
            <person name="Wan K.H."/>
            <person name="Rubin G.M."/>
            <person name="Celniker S.E."/>
        </authorList>
    </citation>
    <scope>NUCLEOTIDE SEQUENCE [LARGE SCALE MRNA]</scope>
    <source>
        <strain>Berkeley</strain>
        <tissue>Embryo</tissue>
    </source>
</reference>
<reference key="5">
    <citation type="journal article" date="2000" name="Science">
        <title>From sequence to chromosome: the tip of the X chromosome of D. melanogaster.</title>
        <authorList>
            <person name="Benos P.V."/>
            <person name="Gatt M.K."/>
            <person name="Ashburner M."/>
            <person name="Murphy L."/>
            <person name="Harris D."/>
            <person name="Barrell B.G."/>
            <person name="Ferraz C."/>
            <person name="Vidal S."/>
            <person name="Brun C."/>
            <person name="Demailles J."/>
            <person name="Cadieu E."/>
            <person name="Dreano S."/>
            <person name="Gloux S."/>
            <person name="Lelaure V."/>
            <person name="Mottier S."/>
            <person name="Galibert F."/>
            <person name="Borkova D."/>
            <person name="Minana B."/>
            <person name="Kafatos F.C."/>
            <person name="Louis C."/>
            <person name="Siden-Kiamos I."/>
            <person name="Bolshakov S."/>
            <person name="Papagiannakis G."/>
            <person name="Spanos L."/>
            <person name="Cox S."/>
            <person name="Madueno E."/>
            <person name="de Pablos B."/>
            <person name="Modolell J."/>
            <person name="Peter A."/>
            <person name="Schoettler P."/>
            <person name="Werner M."/>
            <person name="Mourkioti F."/>
            <person name="Beinert N."/>
            <person name="Dowe G."/>
            <person name="Schaefer U."/>
            <person name="Jaeckle H."/>
            <person name="Bucheton A."/>
            <person name="Callister D.M."/>
            <person name="Campbell L.A."/>
            <person name="Darlamitsou A."/>
            <person name="Henderson N.S."/>
            <person name="McMillan P.J."/>
            <person name="Salles C."/>
            <person name="Tait E.A."/>
            <person name="Valenti P."/>
            <person name="Saunders R.D.C."/>
            <person name="Glover D.M."/>
        </authorList>
    </citation>
    <scope>NUCLEOTIDE SEQUENCE [LARGE SCALE GENOMIC DNA] OF 1-348</scope>
    <source>
        <strain>Oregon-R</strain>
    </source>
</reference>
<reference key="6">
    <citation type="journal article" date="2008" name="J. Proteome Res.">
        <title>Phosphoproteome analysis of Drosophila melanogaster embryos.</title>
        <authorList>
            <person name="Zhai B."/>
            <person name="Villen J."/>
            <person name="Beausoleil S.A."/>
            <person name="Mintseris J."/>
            <person name="Gygi S.P."/>
        </authorList>
    </citation>
    <scope>PHOSPHORYLATION [LARGE SCALE ANALYSIS] AT THR-9</scope>
    <scope>IDENTIFICATION BY MASS SPECTROMETRY</scope>
    <source>
        <tissue>Embryo</tissue>
    </source>
</reference>
<reference key="7">
    <citation type="journal article" date="2009" name="Cell">
        <title>Ars2 regulates both miRNA- and siRNA- dependent silencing and suppresses RNA virus infection in Drosophila.</title>
        <authorList>
            <person name="Sabin L.R."/>
            <person name="Zhou R."/>
            <person name="Gruber J.J."/>
            <person name="Lukinova N."/>
            <person name="Bambina S."/>
            <person name="Berman A."/>
            <person name="Lau C.-K."/>
            <person name="Thompson C.B."/>
            <person name="Cherry S."/>
        </authorList>
    </citation>
    <scope>FUNCTION</scope>
</reference>
<comment type="function">
    <text evidence="4">Component of the cap-binding complex (CBC), which binds cotranscriptionally to the 5'-cap of pre-mRNAs and is involved in various processes such as pre-mRNA splicing and RNA-mediated gene silencing (RNAi). The CBC complex is involved in miRNA-mediated RNA interference via its interaction with Ars2 and is required for primary microRNAs (miRNAs) processing. Also involved in innate immunity via the short interfering RNAs (siRNAs) processing machinery by restricting the viral RNA production. In the CBC complex, Cbp80 does not bind directly capped RNAs (m7GpppG-capped RNA) but is required to stabilize the movement of the N-terminal loop of Cbp20 and lock the CBC into a high affinity cap-binding state with the cap structure.</text>
</comment>
<comment type="subunit">
    <text evidence="1">Component of the nuclear cap-binding complex (CBC), a heterodimer composed of Cbp80 and Cbp20 that interacts with m7GpppG-capped RNA.</text>
</comment>
<comment type="interaction">
    <interactant intactId="EBI-137965">
        <id>Q7K4N3</id>
    </interactant>
    <interactant intactId="EBI-202590">
        <id>P83949</id>
        <label>Ubx</label>
    </interactant>
    <organismsDiffer>false</organismsDiffer>
    <experiments>3</experiments>
</comment>
<comment type="subcellular location">
    <subcellularLocation>
        <location evidence="1">Nucleus</location>
    </subcellularLocation>
</comment>
<comment type="similarity">
    <text evidence="5">Belongs to the NCBP1 family.</text>
</comment>
<name>NCBP1_DROME</name>
<keyword id="KW-0506">mRNA capping</keyword>
<keyword id="KW-0507">mRNA processing</keyword>
<keyword id="KW-0508">mRNA splicing</keyword>
<keyword id="KW-0539">Nucleus</keyword>
<keyword id="KW-0597">Phosphoprotein</keyword>
<keyword id="KW-1185">Reference proteome</keyword>
<keyword id="KW-0943">RNA-mediated gene silencing</keyword>